<dbReference type="EMBL" id="AF036326">
    <property type="protein sequence ID" value="AAC41261.1"/>
    <property type="molecule type" value="mRNA"/>
</dbReference>
<dbReference type="EMBL" id="BC095013">
    <property type="protein sequence ID" value="AAH95013.1"/>
    <property type="molecule type" value="mRNA"/>
</dbReference>
<dbReference type="RefSeq" id="NP_571131.1">
    <property type="nucleotide sequence ID" value="NM_131056.1"/>
</dbReference>
<dbReference type="SMR" id="O73727"/>
<dbReference type="FunCoup" id="O73727">
    <property type="interactions" value="544"/>
</dbReference>
<dbReference type="STRING" id="7955.ENSDARP00000051221"/>
<dbReference type="PaxDb" id="7955-ENSDARP00000051221"/>
<dbReference type="Ensembl" id="ENSDART00000051222">
    <property type="protein sequence ID" value="ENSDARP00000051221"/>
    <property type="gene ID" value="ENSDARG00000035350"/>
</dbReference>
<dbReference type="Ensembl" id="ENSDART00000181413">
    <property type="protein sequence ID" value="ENSDARP00000155430"/>
    <property type="gene ID" value="ENSDARG00000116735"/>
</dbReference>
<dbReference type="Ensembl" id="ENSDART00000185283">
    <property type="protein sequence ID" value="ENSDARP00000153651"/>
    <property type="gene ID" value="ENSDARG00000035350"/>
</dbReference>
<dbReference type="GeneID" id="30262"/>
<dbReference type="KEGG" id="dre:30262"/>
<dbReference type="AGR" id="ZFIN:ZDB-GENE-980526-110"/>
<dbReference type="CTD" id="3630"/>
<dbReference type="ZFIN" id="ZDB-GENE-980526-110">
    <property type="gene designation" value="ins"/>
</dbReference>
<dbReference type="eggNOG" id="ENOG502S3FQ">
    <property type="taxonomic scope" value="Eukaryota"/>
</dbReference>
<dbReference type="HOGENOM" id="CLU_140421_1_0_1"/>
<dbReference type="InParanoid" id="O73727"/>
<dbReference type="OMA" id="YAFKDQM"/>
<dbReference type="OrthoDB" id="10019596at2759"/>
<dbReference type="PhylomeDB" id="O73727"/>
<dbReference type="TreeFam" id="TF332820"/>
<dbReference type="Reactome" id="R-DRE-264876">
    <property type="pathway name" value="Insulin processing"/>
</dbReference>
<dbReference type="Reactome" id="R-DRE-422085">
    <property type="pathway name" value="Synthesis, secretion, and deacylation of Ghrelin"/>
</dbReference>
<dbReference type="Reactome" id="R-DRE-74749">
    <property type="pathway name" value="Signal attenuation"/>
</dbReference>
<dbReference type="Reactome" id="R-DRE-74752">
    <property type="pathway name" value="Signaling by Insulin receptor"/>
</dbReference>
<dbReference type="Reactome" id="R-DRE-77387">
    <property type="pathway name" value="Insulin receptor recycling"/>
</dbReference>
<dbReference type="SignaLink" id="O73727"/>
<dbReference type="PRO" id="PR:O73727"/>
<dbReference type="Proteomes" id="UP000000437">
    <property type="component" value="Alternate scaffold 5"/>
</dbReference>
<dbReference type="Proteomes" id="UP000000437">
    <property type="component" value="Chromosome 5"/>
</dbReference>
<dbReference type="Bgee" id="ENSDARG00000035350">
    <property type="expression patterns" value="Expressed in spleen and 12 other cell types or tissues"/>
</dbReference>
<dbReference type="ExpressionAtlas" id="O73727">
    <property type="expression patterns" value="baseline and differential"/>
</dbReference>
<dbReference type="GO" id="GO:0005615">
    <property type="term" value="C:extracellular space"/>
    <property type="evidence" value="ECO:0000318"/>
    <property type="project" value="GO_Central"/>
</dbReference>
<dbReference type="GO" id="GO:0005179">
    <property type="term" value="F:hormone activity"/>
    <property type="evidence" value="ECO:0007669"/>
    <property type="project" value="UniProtKB-KW"/>
</dbReference>
<dbReference type="GO" id="GO:0006006">
    <property type="term" value="P:glucose metabolic process"/>
    <property type="evidence" value="ECO:0007669"/>
    <property type="project" value="UniProtKB-KW"/>
</dbReference>
<dbReference type="GO" id="GO:2000252">
    <property type="term" value="P:negative regulation of feeding behavior"/>
    <property type="evidence" value="ECO:0000315"/>
    <property type="project" value="ZFIN"/>
</dbReference>
<dbReference type="GO" id="GO:2000228">
    <property type="term" value="P:positive regulation of pancreatic A cell differentiation"/>
    <property type="evidence" value="ECO:0000315"/>
    <property type="project" value="ZFIN"/>
</dbReference>
<dbReference type="GO" id="GO:0009749">
    <property type="term" value="P:response to glucose"/>
    <property type="evidence" value="ECO:0000314"/>
    <property type="project" value="ZFIN"/>
</dbReference>
<dbReference type="GO" id="GO:0031667">
    <property type="term" value="P:response to nutrient levels"/>
    <property type="evidence" value="ECO:0000314"/>
    <property type="project" value="ZFIN"/>
</dbReference>
<dbReference type="GO" id="GO:0003309">
    <property type="term" value="P:type B pancreatic cell differentiation"/>
    <property type="evidence" value="ECO:0000315"/>
    <property type="project" value="ZFIN"/>
</dbReference>
<dbReference type="CDD" id="cd04367">
    <property type="entry name" value="IlGF_insulin_like"/>
    <property type="match status" value="1"/>
</dbReference>
<dbReference type="FunFam" id="1.10.100.10:FF:000003">
    <property type="entry name" value="Insulin"/>
    <property type="match status" value="1"/>
</dbReference>
<dbReference type="Gene3D" id="1.10.100.10">
    <property type="entry name" value="Insulin-like"/>
    <property type="match status" value="1"/>
</dbReference>
<dbReference type="InterPro" id="IPR004825">
    <property type="entry name" value="Insulin"/>
</dbReference>
<dbReference type="InterPro" id="IPR016179">
    <property type="entry name" value="Insulin-like"/>
</dbReference>
<dbReference type="InterPro" id="IPR036438">
    <property type="entry name" value="Insulin-like_sf"/>
</dbReference>
<dbReference type="InterPro" id="IPR022353">
    <property type="entry name" value="Insulin_CS"/>
</dbReference>
<dbReference type="InterPro" id="IPR022352">
    <property type="entry name" value="Insulin_family"/>
</dbReference>
<dbReference type="PANTHER" id="PTHR11454:SF9">
    <property type="entry name" value="INSULIN"/>
    <property type="match status" value="1"/>
</dbReference>
<dbReference type="PANTHER" id="PTHR11454">
    <property type="entry name" value="INSULIN/INSULIN GROWTH FACTOR"/>
    <property type="match status" value="1"/>
</dbReference>
<dbReference type="Pfam" id="PF00049">
    <property type="entry name" value="Insulin"/>
    <property type="match status" value="1"/>
</dbReference>
<dbReference type="PRINTS" id="PR00277">
    <property type="entry name" value="INSULIN"/>
</dbReference>
<dbReference type="PRINTS" id="PR00276">
    <property type="entry name" value="INSULINFAMLY"/>
</dbReference>
<dbReference type="SMART" id="SM00078">
    <property type="entry name" value="IlGF"/>
    <property type="match status" value="1"/>
</dbReference>
<dbReference type="SUPFAM" id="SSF56994">
    <property type="entry name" value="Insulin-like"/>
    <property type="match status" value="1"/>
</dbReference>
<dbReference type="PROSITE" id="PS00262">
    <property type="entry name" value="INSULIN"/>
    <property type="match status" value="1"/>
</dbReference>
<proteinExistence type="inferred from homology"/>
<sequence>MAVWLQAGALLVLLVVSSVSTNPGTPQHLCGSHLVDALYLVCGPTGFFYNPKRDVEPLLGFLPPKSAQETEVADFAFKDHAELIRKRGIVEQCCHKPCSIFELQNYCN</sequence>
<feature type="signal peptide" evidence="1">
    <location>
        <begin position="1"/>
        <end position="21"/>
    </location>
</feature>
<feature type="peptide" id="PRO_0000015767" description="Insulin B chain">
    <location>
        <begin position="22"/>
        <end position="51"/>
    </location>
</feature>
<feature type="propeptide" id="PRO_0000015768" description="C peptide">
    <location>
        <begin position="54"/>
        <end position="84"/>
    </location>
</feature>
<feature type="peptide" id="PRO_0000015769" description="Insulin A chain">
    <location>
        <begin position="88"/>
        <end position="108"/>
    </location>
</feature>
<feature type="disulfide bond" description="Interchain (between B and A chains)" evidence="1">
    <location>
        <begin position="30"/>
        <end position="94"/>
    </location>
</feature>
<feature type="disulfide bond" description="Interchain (between B and A chains)" evidence="1">
    <location>
        <begin position="42"/>
        <end position="107"/>
    </location>
</feature>
<feature type="disulfide bond" evidence="1">
    <location>
        <begin position="93"/>
        <end position="98"/>
    </location>
</feature>
<evidence type="ECO:0000250" key="1"/>
<evidence type="ECO:0000305" key="2"/>
<name>INS_DANRE</name>
<protein>
    <recommendedName>
        <fullName>Insulin</fullName>
    </recommendedName>
    <component>
        <recommendedName>
            <fullName>Insulin B chain</fullName>
        </recommendedName>
    </component>
    <component>
        <recommendedName>
            <fullName>Insulin A chain</fullName>
        </recommendedName>
    </component>
</protein>
<keyword id="KW-0119">Carbohydrate metabolism</keyword>
<keyword id="KW-0165">Cleavage on pair of basic residues</keyword>
<keyword id="KW-1015">Disulfide bond</keyword>
<keyword id="KW-0313">Glucose metabolism</keyword>
<keyword id="KW-0372">Hormone</keyword>
<keyword id="KW-1185">Reference proteome</keyword>
<keyword id="KW-0964">Secreted</keyword>
<keyword id="KW-0732">Signal</keyword>
<comment type="function">
    <text>Insulin decreases blood glucose concentration. It increases cell permeability to monosaccharides, amino acids and fatty acids. It accelerates glycolysis, the pentose phosphate cycle, and glycogen synthesis in liver.</text>
</comment>
<comment type="subunit">
    <text>Heterodimer of a B chain and an A chain linked by two disulfide bonds.</text>
</comment>
<comment type="subcellular location">
    <subcellularLocation>
        <location>Secreted</location>
    </subcellularLocation>
</comment>
<comment type="similarity">
    <text evidence="2">Belongs to the insulin family.</text>
</comment>
<gene>
    <name type="primary">ins</name>
</gene>
<accession>O73727</accession>
<accession>Q504H9</accession>
<reference key="1">
    <citation type="journal article" date="1998" name="Endocrinology">
        <title>Conservation of PDX-1 structure, function, and expression in zebrafish.</title>
        <authorList>
            <person name="Milewski W.M."/>
            <person name="Duguay S.J."/>
            <person name="Chan S.J."/>
            <person name="Steiner D.F."/>
        </authorList>
    </citation>
    <scope>NUCLEOTIDE SEQUENCE [MRNA]</scope>
</reference>
<reference key="2">
    <citation type="submission" date="2005-05" db="EMBL/GenBank/DDBJ databases">
        <authorList>
            <consortium name="NIH - Zebrafish Gene Collection (ZGC) project"/>
        </authorList>
    </citation>
    <scope>NUCLEOTIDE SEQUENCE [LARGE SCALE MRNA]</scope>
    <source>
        <tissue>Liver</tissue>
    </source>
</reference>
<organism>
    <name type="scientific">Danio rerio</name>
    <name type="common">Zebrafish</name>
    <name type="synonym">Brachydanio rerio</name>
    <dbReference type="NCBI Taxonomy" id="7955"/>
    <lineage>
        <taxon>Eukaryota</taxon>
        <taxon>Metazoa</taxon>
        <taxon>Chordata</taxon>
        <taxon>Craniata</taxon>
        <taxon>Vertebrata</taxon>
        <taxon>Euteleostomi</taxon>
        <taxon>Actinopterygii</taxon>
        <taxon>Neopterygii</taxon>
        <taxon>Teleostei</taxon>
        <taxon>Ostariophysi</taxon>
        <taxon>Cypriniformes</taxon>
        <taxon>Danionidae</taxon>
        <taxon>Danioninae</taxon>
        <taxon>Danio</taxon>
    </lineage>
</organism>